<feature type="chain" id="PRO_0000407395" description="tRNA pseudouridine synthase Pus10">
    <location>
        <begin position="1"/>
        <end position="411"/>
    </location>
</feature>
<feature type="domain" description="THUMP" evidence="1">
    <location>
        <begin position="65"/>
        <end position="192"/>
    </location>
</feature>
<feature type="active site" description="Nucleophile" evidence="1">
    <location>
        <position position="244"/>
    </location>
</feature>
<feature type="binding site" evidence="1">
    <location>
        <position position="305"/>
    </location>
    <ligand>
        <name>substrate</name>
    </ligand>
</feature>
<feature type="binding site" evidence="1">
    <location>
        <position position="376"/>
    </location>
    <ligand>
        <name>substrate</name>
    </ligand>
</feature>
<gene>
    <name evidence="1" type="primary">pus10</name>
    <name type="ordered locus">Pars_1771</name>
</gene>
<keyword id="KW-0413">Isomerase</keyword>
<keyword id="KW-0694">RNA-binding</keyword>
<keyword id="KW-0819">tRNA processing</keyword>
<sequence length="411" mass="46535">MELISKALEAVRRYPLCDSCLGRLFALMGYGIENRERGQAIKTILHMAAVSDYRKGKDVTADLIALAKCHLPTRRFLAGVGIRVDEERCYICGDLMEGVEKYAEMAVEQLRGLDFVSFAVGSTLPEELLEKEAEVVKSLLVTTGESVKHEVNRRIGKELLRRLSDKRVDKLRPNVVVNVDLVSGQVKVVRNPILIGGRYLKLGRKIAQAKRFGNVRTTLLEKLAYLRDTFGGEDHVIHVSGREDSDARMLGSGRPLVVEVKQPLRYTAQVAPFRDKDVIFLPVGFTDRNEVRRLKEKAKTDIKLYRVLVLSESPLKQDDLSKLSALSGATVTQYTPRRIKRLHPRKKRVRMVYDVAWRLVSPHVFELYIRCQGGLYVKEFVHGDGGRTAPNVAELLNTRLEVLELDVLYIE</sequence>
<organism>
    <name type="scientific">Pyrobaculum arsenaticum (strain DSM 13514 / JCM 11321 / PZ6)</name>
    <dbReference type="NCBI Taxonomy" id="340102"/>
    <lineage>
        <taxon>Archaea</taxon>
        <taxon>Thermoproteota</taxon>
        <taxon>Thermoprotei</taxon>
        <taxon>Thermoproteales</taxon>
        <taxon>Thermoproteaceae</taxon>
        <taxon>Pyrobaculum</taxon>
    </lineage>
</organism>
<accession>A4WLQ5</accession>
<protein>
    <recommendedName>
        <fullName evidence="1">tRNA pseudouridine synthase Pus10</fullName>
        <ecNumber evidence="1">5.4.99.25</ecNumber>
    </recommendedName>
    <alternativeName>
        <fullName evidence="1">tRNA pseudouridine 54/55 synthase</fullName>
        <shortName evidence="1">Psi54/55 synthase</shortName>
    </alternativeName>
</protein>
<evidence type="ECO:0000255" key="1">
    <source>
        <dbReference type="HAMAP-Rule" id="MF_01893"/>
    </source>
</evidence>
<comment type="function">
    <text evidence="1">Responsible for synthesis of pseudouridine from uracil-54 and uracil-55 in the psi GC loop of transfer RNAs.</text>
</comment>
<comment type="catalytic activity">
    <reaction evidence="1">
        <text>uridine(54) in tRNA = pseudouridine(54) in tRNA</text>
        <dbReference type="Rhea" id="RHEA:57876"/>
        <dbReference type="Rhea" id="RHEA-COMP:10193"/>
        <dbReference type="Rhea" id="RHEA-COMP:14141"/>
        <dbReference type="ChEBI" id="CHEBI:65314"/>
        <dbReference type="ChEBI" id="CHEBI:65315"/>
    </reaction>
</comment>
<comment type="catalytic activity">
    <reaction evidence="1">
        <text>uridine(55) in tRNA = pseudouridine(55) in tRNA</text>
        <dbReference type="Rhea" id="RHEA:42532"/>
        <dbReference type="Rhea" id="RHEA-COMP:10101"/>
        <dbReference type="Rhea" id="RHEA-COMP:10102"/>
        <dbReference type="ChEBI" id="CHEBI:65314"/>
        <dbReference type="ChEBI" id="CHEBI:65315"/>
        <dbReference type="EC" id="5.4.99.25"/>
    </reaction>
</comment>
<comment type="similarity">
    <text evidence="1">Belongs to the pseudouridine synthase Pus10 family.</text>
</comment>
<name>PUS10_PYRAR</name>
<proteinExistence type="inferred from homology"/>
<reference key="1">
    <citation type="submission" date="2007-04" db="EMBL/GenBank/DDBJ databases">
        <title>Complete sequence of Pyrobaculum arsenaticum DSM 13514.</title>
        <authorList>
            <consortium name="US DOE Joint Genome Institute"/>
            <person name="Copeland A."/>
            <person name="Lucas S."/>
            <person name="Lapidus A."/>
            <person name="Barry K."/>
            <person name="Glavina del Rio T."/>
            <person name="Dalin E."/>
            <person name="Tice H."/>
            <person name="Pitluck S."/>
            <person name="Chain P."/>
            <person name="Malfatti S."/>
            <person name="Shin M."/>
            <person name="Vergez L."/>
            <person name="Schmutz J."/>
            <person name="Larimer F."/>
            <person name="Land M."/>
            <person name="Hauser L."/>
            <person name="Kyrpides N."/>
            <person name="Mikhailova N."/>
            <person name="Cozen A.E."/>
            <person name="Fitz-Gibbon S.T."/>
            <person name="House C.H."/>
            <person name="Saltikov C."/>
            <person name="Lowe T.M."/>
            <person name="Richardson P."/>
        </authorList>
    </citation>
    <scope>NUCLEOTIDE SEQUENCE [LARGE SCALE GENOMIC DNA]</scope>
    <source>
        <strain>ATCC 700994 / DSM 13514 / JCM 11321 / PZ6</strain>
    </source>
</reference>
<dbReference type="EC" id="5.4.99.25" evidence="1"/>
<dbReference type="EMBL" id="CP000660">
    <property type="protein sequence ID" value="ABP51322.1"/>
    <property type="molecule type" value="Genomic_DNA"/>
</dbReference>
<dbReference type="SMR" id="A4WLQ5"/>
<dbReference type="STRING" id="340102.Pars_1771"/>
<dbReference type="KEGG" id="pas:Pars_1771"/>
<dbReference type="HOGENOM" id="CLU_028780_2_0_2"/>
<dbReference type="OrthoDB" id="10348at2157"/>
<dbReference type="PhylomeDB" id="A4WLQ5"/>
<dbReference type="Proteomes" id="UP000001567">
    <property type="component" value="Chromosome"/>
</dbReference>
<dbReference type="GO" id="GO:0000049">
    <property type="term" value="F:tRNA binding"/>
    <property type="evidence" value="ECO:0007669"/>
    <property type="project" value="InterPro"/>
</dbReference>
<dbReference type="GO" id="GO:0160148">
    <property type="term" value="F:tRNA pseudouridine(55) synthase activity"/>
    <property type="evidence" value="ECO:0007669"/>
    <property type="project" value="UniProtKB-EC"/>
</dbReference>
<dbReference type="GO" id="GO:0031119">
    <property type="term" value="P:tRNA pseudouridine synthesis"/>
    <property type="evidence" value="ECO:0007669"/>
    <property type="project" value="UniProtKB-UniRule"/>
</dbReference>
<dbReference type="FunFam" id="3.30.70.3190:FF:000001">
    <property type="entry name" value="tRNA pseudouridine synthase Pus10"/>
    <property type="match status" value="1"/>
</dbReference>
<dbReference type="Gene3D" id="3.30.70.3190">
    <property type="match status" value="1"/>
</dbReference>
<dbReference type="HAMAP" id="MF_01893">
    <property type="entry name" value="Pus10_arch"/>
    <property type="match status" value="1"/>
</dbReference>
<dbReference type="InterPro" id="IPR020103">
    <property type="entry name" value="PsdUridine_synth_cat_dom_sf"/>
</dbReference>
<dbReference type="InterPro" id="IPR005912">
    <property type="entry name" value="Pus10"/>
</dbReference>
<dbReference type="InterPro" id="IPR039894">
    <property type="entry name" value="Pus10-like"/>
</dbReference>
<dbReference type="InterPro" id="IPR048741">
    <property type="entry name" value="Pus10-like_C"/>
</dbReference>
<dbReference type="InterPro" id="IPR055174">
    <property type="entry name" value="Pus10_THUMP_arc"/>
</dbReference>
<dbReference type="InterPro" id="IPR004114">
    <property type="entry name" value="THUMP_dom"/>
</dbReference>
<dbReference type="NCBIfam" id="TIGR01213">
    <property type="entry name" value="pseudo_Pus10arc"/>
    <property type="match status" value="1"/>
</dbReference>
<dbReference type="PANTHER" id="PTHR21568">
    <property type="entry name" value="TRNA PSEUDOURIDINE SYNTHASE PUS10"/>
    <property type="match status" value="1"/>
</dbReference>
<dbReference type="PANTHER" id="PTHR21568:SF0">
    <property type="entry name" value="TRNA PSEUDOURIDINE SYNTHASE PUS10"/>
    <property type="match status" value="1"/>
</dbReference>
<dbReference type="Pfam" id="PF21238">
    <property type="entry name" value="Pus10_C"/>
    <property type="match status" value="1"/>
</dbReference>
<dbReference type="Pfam" id="PF22023">
    <property type="entry name" value="Pus10_THUMP_arc"/>
    <property type="match status" value="1"/>
</dbReference>
<dbReference type="SUPFAM" id="SSF55120">
    <property type="entry name" value="Pseudouridine synthase"/>
    <property type="match status" value="1"/>
</dbReference>
<dbReference type="PROSITE" id="PS51165">
    <property type="entry name" value="THUMP"/>
    <property type="match status" value="1"/>
</dbReference>